<sequence length="39" mass="4405">IFECVFSCDIEKEGKPCKPKGEKKCSGGWKCKIKLCLKI</sequence>
<accession>P61510</accession>
<accession>P18928</accession>
<proteinExistence type="evidence at protein level"/>
<evidence type="ECO:0000250" key="1">
    <source>
        <dbReference type="UniProtKB" id="P0DL80"/>
    </source>
</evidence>
<evidence type="ECO:0000250" key="2">
    <source>
        <dbReference type="UniProtKB" id="P0DL81"/>
    </source>
</evidence>
<evidence type="ECO:0000250" key="3">
    <source>
        <dbReference type="UniProtKB" id="P61509"/>
    </source>
</evidence>
<evidence type="ECO:0000269" key="4">
    <source>
    </source>
</evidence>
<evidence type="ECO:0000303" key="5">
    <source>
    </source>
</evidence>
<evidence type="ECO:0000305" key="6"/>
<evidence type="ECO:0000305" key="7">
    <source>
    </source>
</evidence>
<name>TX1G_APHSP</name>
<organism>
    <name type="scientific">Aphonopelma sp.</name>
    <name type="common">American tarantula</name>
    <dbReference type="NCBI Taxonomy" id="29932"/>
    <lineage>
        <taxon>Eukaryota</taxon>
        <taxon>Metazoa</taxon>
        <taxon>Ecdysozoa</taxon>
        <taxon>Arthropoda</taxon>
        <taxon>Chelicerata</taxon>
        <taxon>Arachnida</taxon>
        <taxon>Araneae</taxon>
        <taxon>Mygalomorphae</taxon>
        <taxon>Theraphosidae</taxon>
        <taxon>Aphonopelma</taxon>
    </lineage>
</organism>
<protein>
    <recommendedName>
        <fullName evidence="6">Omega-theraphotoxin-Asp1g</fullName>
        <shortName evidence="6">Omega-TRTX-Asp1g</shortName>
    </recommendedName>
    <alternativeName>
        <fullName evidence="5">Eurypelma spider toxin 2</fullName>
        <shortName evidence="5">ESTx2</shortName>
    </alternativeName>
</protein>
<reference key="1">
    <citation type="journal article" date="1989" name="Biol. Chem. Hoppe-Seyler">
        <title>Tarantula (Eurypelma californicum) venom, a multicomponent system.</title>
        <authorList>
            <person name="Savel-Niemann A."/>
        </authorList>
    </citation>
    <scope>PROTEIN SEQUENCE</scope>
    <scope>SUBCELLULAR LOCATION</scope>
    <source>
        <tissue>Venom</tissue>
    </source>
</reference>
<keyword id="KW-0108">Calcium channel impairing toxin</keyword>
<keyword id="KW-0903">Direct protein sequencing</keyword>
<keyword id="KW-1015">Disulfide bond</keyword>
<keyword id="KW-0872">Ion channel impairing toxin</keyword>
<keyword id="KW-0528">Neurotoxin</keyword>
<keyword id="KW-0964">Secreted</keyword>
<keyword id="KW-0800">Toxin</keyword>
<keyword id="KW-1218">Voltage-gated calcium channel impairing toxin</keyword>
<comment type="function">
    <text evidence="2 3">Inhibits voltage-gated calcium channels (Cav) in rat cerebellar granule cells (By similarity). Has insecticidal activity (By similarity).</text>
</comment>
<comment type="subcellular location">
    <subcellularLocation>
        <location evidence="4">Secreted</location>
    </subcellularLocation>
</comment>
<comment type="tissue specificity">
    <text evidence="7">Expressed by the venom gland.</text>
</comment>
<comment type="miscellaneous">
    <text evidence="6">The primary structure of the mature peptide is identical to that of venom protein 1 from Brachypelma smithi (AC P0DL80).</text>
</comment>
<comment type="similarity">
    <text evidence="6">Belongs to the neurotoxin 12 (Hwtx-2) family. 06 (TXP1) subfamily.</text>
</comment>
<dbReference type="SMR" id="P61510"/>
<dbReference type="ArachnoServer" id="AS000249">
    <property type="toxin name" value="omega-theraphotoxin-Asp1g"/>
</dbReference>
<dbReference type="GO" id="GO:0005576">
    <property type="term" value="C:extracellular region"/>
    <property type="evidence" value="ECO:0007669"/>
    <property type="project" value="UniProtKB-SubCell"/>
</dbReference>
<dbReference type="GO" id="GO:0005246">
    <property type="term" value="F:calcium channel regulator activity"/>
    <property type="evidence" value="ECO:0007669"/>
    <property type="project" value="UniProtKB-KW"/>
</dbReference>
<dbReference type="GO" id="GO:0090729">
    <property type="term" value="F:toxin activity"/>
    <property type="evidence" value="ECO:0007669"/>
    <property type="project" value="UniProtKB-KW"/>
</dbReference>
<dbReference type="InterPro" id="IPR012625">
    <property type="entry name" value="Hwtx-2-like"/>
</dbReference>
<dbReference type="Pfam" id="PF08089">
    <property type="entry name" value="Toxin_20"/>
    <property type="match status" value="1"/>
</dbReference>
<dbReference type="SUPFAM" id="SSF57059">
    <property type="entry name" value="omega toxin-like"/>
    <property type="match status" value="1"/>
</dbReference>
<dbReference type="PROSITE" id="PS60022">
    <property type="entry name" value="HWTX_2"/>
    <property type="match status" value="1"/>
</dbReference>
<feature type="peptide" id="PRO_0000044981" description="Omega-theraphotoxin-Asp1g" evidence="4">
    <location>
        <begin position="1"/>
        <end position="39"/>
    </location>
</feature>
<feature type="disulfide bond" evidence="1">
    <location>
        <begin position="4"/>
        <end position="25"/>
    </location>
</feature>
<feature type="disulfide bond" evidence="1">
    <location>
        <begin position="8"/>
        <end position="31"/>
    </location>
</feature>
<feature type="disulfide bond" evidence="1">
    <location>
        <begin position="17"/>
        <end position="36"/>
    </location>
</feature>